<keyword id="KW-1003">Cell membrane</keyword>
<keyword id="KW-0472">Membrane</keyword>
<keyword id="KW-1185">Reference proteome</keyword>
<keyword id="KW-0812">Transmembrane</keyword>
<keyword id="KW-1133">Transmembrane helix</keyword>
<dbReference type="EMBL" id="BA000022">
    <property type="protein sequence ID" value="BAA10758.1"/>
    <property type="molecule type" value="Genomic_DNA"/>
</dbReference>
<dbReference type="PIR" id="S77066">
    <property type="entry name" value="S77066"/>
</dbReference>
<dbReference type="SMR" id="Q55979"/>
<dbReference type="STRING" id="1148.gene:10500262"/>
<dbReference type="PaxDb" id="1148-1006605"/>
<dbReference type="EnsemblBacteria" id="BAA10758">
    <property type="protein sequence ID" value="BAA10758"/>
    <property type="gene ID" value="BAA10758"/>
</dbReference>
<dbReference type="KEGG" id="syn:slr0712"/>
<dbReference type="eggNOG" id="COG0392">
    <property type="taxonomic scope" value="Bacteria"/>
</dbReference>
<dbReference type="InParanoid" id="Q55979"/>
<dbReference type="PhylomeDB" id="Q55979"/>
<dbReference type="Proteomes" id="UP000001425">
    <property type="component" value="Chromosome"/>
</dbReference>
<dbReference type="GO" id="GO:0005886">
    <property type="term" value="C:plasma membrane"/>
    <property type="evidence" value="ECO:0007669"/>
    <property type="project" value="UniProtKB-SubCell"/>
</dbReference>
<dbReference type="InterPro" id="IPR022791">
    <property type="entry name" value="L-PG_synthase/AglD"/>
</dbReference>
<dbReference type="Pfam" id="PF03706">
    <property type="entry name" value="LPG_synthase_TM"/>
    <property type="match status" value="1"/>
</dbReference>
<gene>
    <name type="ordered locus">slr0712</name>
</gene>
<evidence type="ECO:0000255" key="1"/>
<evidence type="ECO:0000305" key="2"/>
<protein>
    <recommendedName>
        <fullName>Uncharacterized protein slr0712</fullName>
    </recommendedName>
</protein>
<reference key="1">
    <citation type="journal article" date="1995" name="DNA Res.">
        <title>Sequence analysis of the genome of the unicellular cyanobacterium Synechocystis sp. strain PCC6803. I. Sequence features in the 1 Mb region from map positions 64% to 92% of the genome.</title>
        <authorList>
            <person name="Kaneko T."/>
            <person name="Tanaka A."/>
            <person name="Sato S."/>
            <person name="Kotani H."/>
            <person name="Sazuka T."/>
            <person name="Miyajima N."/>
            <person name="Sugiura M."/>
            <person name="Tabata S."/>
        </authorList>
    </citation>
    <scope>NUCLEOTIDE SEQUENCE [LARGE SCALE GENOMIC DNA]</scope>
    <source>
        <strain>ATCC 27184 / PCC 6803 / N-1</strain>
    </source>
</reference>
<reference key="2">
    <citation type="journal article" date="1996" name="DNA Res.">
        <title>Sequence analysis of the genome of the unicellular cyanobacterium Synechocystis sp. strain PCC6803. II. Sequence determination of the entire genome and assignment of potential protein-coding regions.</title>
        <authorList>
            <person name="Kaneko T."/>
            <person name="Sato S."/>
            <person name="Kotani H."/>
            <person name="Tanaka A."/>
            <person name="Asamizu E."/>
            <person name="Nakamura Y."/>
            <person name="Miyajima N."/>
            <person name="Hirosawa M."/>
            <person name="Sugiura M."/>
            <person name="Sasamoto S."/>
            <person name="Kimura T."/>
            <person name="Hosouchi T."/>
            <person name="Matsuno A."/>
            <person name="Muraki A."/>
            <person name="Nakazaki N."/>
            <person name="Naruo K."/>
            <person name="Okumura S."/>
            <person name="Shimpo S."/>
            <person name="Takeuchi C."/>
            <person name="Wada T."/>
            <person name="Watanabe A."/>
            <person name="Yamada M."/>
            <person name="Yasuda M."/>
            <person name="Tabata S."/>
        </authorList>
    </citation>
    <scope>NUCLEOTIDE SEQUENCE [LARGE SCALE GENOMIC DNA]</scope>
    <source>
        <strain>ATCC 27184 / PCC 6803 / Kazusa</strain>
    </source>
</reference>
<accession>Q55979</accession>
<feature type="chain" id="PRO_0000157874" description="Uncharacterized protein slr0712">
    <location>
        <begin position="1"/>
        <end position="322"/>
    </location>
</feature>
<feature type="transmembrane region" description="Helical" evidence="1">
    <location>
        <begin position="7"/>
        <end position="27"/>
    </location>
</feature>
<feature type="transmembrane region" description="Helical" evidence="1">
    <location>
        <begin position="54"/>
        <end position="74"/>
    </location>
</feature>
<feature type="transmembrane region" description="Helical" evidence="1">
    <location>
        <begin position="87"/>
        <end position="107"/>
    </location>
</feature>
<feature type="transmembrane region" description="Helical" evidence="1">
    <location>
        <begin position="128"/>
        <end position="148"/>
    </location>
</feature>
<feature type="transmembrane region" description="Helical" evidence="1">
    <location>
        <begin position="162"/>
        <end position="182"/>
    </location>
</feature>
<feature type="transmembrane region" description="Helical" evidence="1">
    <location>
        <begin position="209"/>
        <end position="229"/>
    </location>
</feature>
<feature type="transmembrane region" description="Helical" evidence="1">
    <location>
        <begin position="249"/>
        <end position="269"/>
    </location>
</feature>
<feature type="transmembrane region" description="Helical" evidence="1">
    <location>
        <begin position="287"/>
        <end position="307"/>
    </location>
</feature>
<sequence>MTAWQKIQKIAPAAIGACLFVLSIGAINSELHHYGWQNVLASFQGIVKTRLAGAFALMLINYIILTGYDTLAMFYLGQSLPLTKTSFVGFVSYAISNSVGLALLSGSAIRYRLYQSWQVSAPIIAQAIAFCNLSFWVGLLTVGGITFVVDPLQLPAFLHLPFLSVHPIGFTFLAIIGIYLLITGNLIKPFKIGQWQTPKIPFAVSLAQIGLTAVDWILASGILYVLLPGHHHLSFPGFFGIYLLAQVAGIISNVPGGLGVFETVVLFLLTPKYSSVQVLGALLAYRVIYYWIPLGSASLSLGAFELLQHRRERRQKSGSESE</sequence>
<proteinExistence type="predicted"/>
<comment type="subcellular location">
    <subcellularLocation>
        <location evidence="2">Cell membrane</location>
        <topology evidence="2">Multi-pass membrane protein</topology>
    </subcellularLocation>
</comment>
<comment type="similarity">
    <text evidence="2">To E.coli YbhN.</text>
</comment>
<name>Y712_SYNY3</name>
<organism>
    <name type="scientific">Synechocystis sp. (strain ATCC 27184 / PCC 6803 / Kazusa)</name>
    <dbReference type="NCBI Taxonomy" id="1111708"/>
    <lineage>
        <taxon>Bacteria</taxon>
        <taxon>Bacillati</taxon>
        <taxon>Cyanobacteriota</taxon>
        <taxon>Cyanophyceae</taxon>
        <taxon>Synechococcales</taxon>
        <taxon>Merismopediaceae</taxon>
        <taxon>Synechocystis</taxon>
    </lineage>
</organism>